<protein>
    <recommendedName>
        <fullName evidence="1">UPF0060 membrane protein RHA1_ro06609</fullName>
    </recommendedName>
</protein>
<dbReference type="EMBL" id="CP000431">
    <property type="protein sequence ID" value="ABG98382.1"/>
    <property type="molecule type" value="Genomic_DNA"/>
</dbReference>
<dbReference type="RefSeq" id="WP_009479771.1">
    <property type="nucleotide sequence ID" value="NC_008268.1"/>
</dbReference>
<dbReference type="KEGG" id="rha:RHA1_ro06609"/>
<dbReference type="eggNOG" id="COG1742">
    <property type="taxonomic scope" value="Bacteria"/>
</dbReference>
<dbReference type="HOGENOM" id="CLU_117653_0_1_11"/>
<dbReference type="OrthoDB" id="123240at2"/>
<dbReference type="Proteomes" id="UP000008710">
    <property type="component" value="Chromosome"/>
</dbReference>
<dbReference type="GO" id="GO:0005886">
    <property type="term" value="C:plasma membrane"/>
    <property type="evidence" value="ECO:0007669"/>
    <property type="project" value="UniProtKB-SubCell"/>
</dbReference>
<dbReference type="HAMAP" id="MF_00010">
    <property type="entry name" value="UPF0060"/>
    <property type="match status" value="1"/>
</dbReference>
<dbReference type="InterPro" id="IPR003844">
    <property type="entry name" value="UPF0060"/>
</dbReference>
<dbReference type="NCBIfam" id="NF002586">
    <property type="entry name" value="PRK02237.1"/>
    <property type="match status" value="1"/>
</dbReference>
<dbReference type="PANTHER" id="PTHR36116">
    <property type="entry name" value="UPF0060 MEMBRANE PROTEIN YNFA"/>
    <property type="match status" value="1"/>
</dbReference>
<dbReference type="PANTHER" id="PTHR36116:SF1">
    <property type="entry name" value="UPF0060 MEMBRANE PROTEIN YNFA"/>
    <property type="match status" value="1"/>
</dbReference>
<dbReference type="Pfam" id="PF02694">
    <property type="entry name" value="UPF0060"/>
    <property type="match status" value="1"/>
</dbReference>
<dbReference type="SUPFAM" id="SSF103481">
    <property type="entry name" value="Multidrug resistance efflux transporter EmrE"/>
    <property type="match status" value="1"/>
</dbReference>
<feature type="chain" id="PRO_0000282259" description="UPF0060 membrane protein RHA1_ro06609">
    <location>
        <begin position="1"/>
        <end position="109"/>
    </location>
</feature>
<feature type="transmembrane region" description="Helical" evidence="1">
    <location>
        <begin position="7"/>
        <end position="27"/>
    </location>
</feature>
<feature type="transmembrane region" description="Helical" evidence="1">
    <location>
        <begin position="33"/>
        <end position="53"/>
    </location>
</feature>
<feature type="transmembrane region" description="Helical" evidence="1">
    <location>
        <begin position="62"/>
        <end position="82"/>
    </location>
</feature>
<feature type="transmembrane region" description="Helical" evidence="1">
    <location>
        <begin position="88"/>
        <end position="108"/>
    </location>
</feature>
<evidence type="ECO:0000255" key="1">
    <source>
        <dbReference type="HAMAP-Rule" id="MF_00010"/>
    </source>
</evidence>
<reference key="1">
    <citation type="journal article" date="2006" name="Proc. Natl. Acad. Sci. U.S.A.">
        <title>The complete genome of Rhodococcus sp. RHA1 provides insights into a catabolic powerhouse.</title>
        <authorList>
            <person name="McLeod M.P."/>
            <person name="Warren R.L."/>
            <person name="Hsiao W.W.L."/>
            <person name="Araki N."/>
            <person name="Myhre M."/>
            <person name="Fernandes C."/>
            <person name="Miyazawa D."/>
            <person name="Wong W."/>
            <person name="Lillquist A.L."/>
            <person name="Wang D."/>
            <person name="Dosanjh M."/>
            <person name="Hara H."/>
            <person name="Petrescu A."/>
            <person name="Morin R.D."/>
            <person name="Yang G."/>
            <person name="Stott J.M."/>
            <person name="Schein J.E."/>
            <person name="Shin H."/>
            <person name="Smailus D."/>
            <person name="Siddiqui A.S."/>
            <person name="Marra M.A."/>
            <person name="Jones S.J.M."/>
            <person name="Holt R."/>
            <person name="Brinkman F.S.L."/>
            <person name="Miyauchi K."/>
            <person name="Fukuda M."/>
            <person name="Davies J.E."/>
            <person name="Mohn W.W."/>
            <person name="Eltis L.D."/>
        </authorList>
    </citation>
    <scope>NUCLEOTIDE SEQUENCE [LARGE SCALE GENOMIC DNA]</scope>
    <source>
        <strain>RHA1</strain>
    </source>
</reference>
<sequence length="109" mass="11582">MTVAKSVALFAVAALFEIGGAWLVWQGVREHRGWIWIGAGVAALGAYGFVATLQPDAHFGRILAAYGGVFVAGSLIWGMVADGFRPDRWDVSGALICLLGMAVIMYAPR</sequence>
<name>Y6609_RHOJR</name>
<keyword id="KW-1003">Cell membrane</keyword>
<keyword id="KW-0472">Membrane</keyword>
<keyword id="KW-0812">Transmembrane</keyword>
<keyword id="KW-1133">Transmembrane helix</keyword>
<organism>
    <name type="scientific">Rhodococcus jostii (strain RHA1)</name>
    <dbReference type="NCBI Taxonomy" id="101510"/>
    <lineage>
        <taxon>Bacteria</taxon>
        <taxon>Bacillati</taxon>
        <taxon>Actinomycetota</taxon>
        <taxon>Actinomycetes</taxon>
        <taxon>Mycobacteriales</taxon>
        <taxon>Nocardiaceae</taxon>
        <taxon>Rhodococcus</taxon>
    </lineage>
</organism>
<comment type="subcellular location">
    <subcellularLocation>
        <location evidence="1">Cell membrane</location>
        <topology evidence="1">Multi-pass membrane protein</topology>
    </subcellularLocation>
</comment>
<comment type="similarity">
    <text evidence="1">Belongs to the UPF0060 family.</text>
</comment>
<gene>
    <name type="ordered locus">RHA1_ro06609</name>
</gene>
<accession>Q0S254</accession>
<proteinExistence type="inferred from homology"/>